<organism>
    <name type="scientific">Mucor circinelloides f. lusitanicus</name>
    <name type="common">Mucor racemosus var. lusitanicus</name>
    <dbReference type="NCBI Taxonomy" id="29924"/>
    <lineage>
        <taxon>Eukaryota</taxon>
        <taxon>Fungi</taxon>
        <taxon>Fungi incertae sedis</taxon>
        <taxon>Mucoromycota</taxon>
        <taxon>Mucoromycotina</taxon>
        <taxon>Mucoromycetes</taxon>
        <taxon>Mucorales</taxon>
        <taxon>Mucorineae</taxon>
        <taxon>Mucoraceae</taxon>
        <taxon>Mucor</taxon>
    </lineage>
</organism>
<reference key="1">
    <citation type="journal article" date="2002" name="Fungal Genet. Biol.">
        <title>Cloning of glyceraldehyde-3-phosphate dehydrogenase-encoding genes in Mucor circinelloides (Syn. racemosus) and use of the gpd1 promoter for recombinant protein production.</title>
        <authorList>
            <person name="Wolff A.M."/>
            <person name="Arnau J."/>
        </authorList>
    </citation>
    <scope>NUCLEOTIDE SEQUENCE [GENOMIC DNA]</scope>
    <scope>INDUCTION</scope>
    <source>
        <strain>ATCC 90680 / R7B</strain>
    </source>
</reference>
<name>G3P1_MUCCL</name>
<keyword id="KW-0963">Cytoplasm</keyword>
<keyword id="KW-0324">Glycolysis</keyword>
<keyword id="KW-0520">NAD</keyword>
<keyword id="KW-0560">Oxidoreductase</keyword>
<evidence type="ECO:0000250" key="1"/>
<evidence type="ECO:0000255" key="2">
    <source>
        <dbReference type="PROSITE-ProRule" id="PRU10009"/>
    </source>
</evidence>
<evidence type="ECO:0000269" key="3">
    <source>
    </source>
</evidence>
<evidence type="ECO:0000305" key="4"/>
<protein>
    <recommendedName>
        <fullName>Glyceraldehyde-3-phosphate dehydrogenase 1</fullName>
        <shortName>GAPDH 1</shortName>
        <ecNumber>1.2.1.12</ecNumber>
    </recommendedName>
</protein>
<comment type="catalytic activity">
    <reaction evidence="2">
        <text>D-glyceraldehyde 3-phosphate + phosphate + NAD(+) = (2R)-3-phospho-glyceroyl phosphate + NADH + H(+)</text>
        <dbReference type="Rhea" id="RHEA:10300"/>
        <dbReference type="ChEBI" id="CHEBI:15378"/>
        <dbReference type="ChEBI" id="CHEBI:43474"/>
        <dbReference type="ChEBI" id="CHEBI:57540"/>
        <dbReference type="ChEBI" id="CHEBI:57604"/>
        <dbReference type="ChEBI" id="CHEBI:57945"/>
        <dbReference type="ChEBI" id="CHEBI:59776"/>
        <dbReference type="EC" id="1.2.1.12"/>
    </reaction>
</comment>
<comment type="pathway">
    <text>Carbohydrate degradation; glycolysis; pyruvate from D-glyceraldehyde 3-phosphate: step 1/5.</text>
</comment>
<comment type="subunit">
    <text evidence="1">Homotetramer.</text>
</comment>
<comment type="subcellular location">
    <subcellularLocation>
        <location evidence="1">Cytoplasm</location>
    </subcellularLocation>
</comment>
<comment type="induction">
    <text evidence="3">Highly expressed under anaerobic growth conditions in the presence of glucose and the expression is highly regulated in response to carbon source and/or anaerobiosis.</text>
</comment>
<comment type="similarity">
    <text evidence="4">Belongs to the glyceraldehyde-3-phosphate dehydrogenase family.</text>
</comment>
<sequence>MVVQVGINGFGRIGRIVLRATESNKDVQVVAINDPFIPLDYMVYMLKYDTVHGRFDGSVEAKDGKLVVNGHAIAVSAERDPTSIPWGSAGADYVVESTGVFTTTEAASAHLKGGAKKVIISAPSADAPMFVCGVNLEAYKSEYKVISNASCTTNCLAPLAKVINDNFGIADGLMTTVHATTATQKTVDGPSHKDWRGGRAAAANIIPSSTGAAKAVGKVIPALNGKLTGMAFRVPTPDVSVVDLTVNLSKGASYDEIKQAIKKASETTMKGVLGYTSDAVVSSDFVGEVCSSVFDAAAGIQLTPTFVKLIAWYDNEYGYSNRVVDLLVHAAKVDGAL</sequence>
<dbReference type="EC" id="1.2.1.12"/>
<dbReference type="EMBL" id="AJ293012">
    <property type="protein sequence ID" value="CAC37403.1"/>
    <property type="molecule type" value="Genomic_DNA"/>
</dbReference>
<dbReference type="SMR" id="Q9C136"/>
<dbReference type="UniPathway" id="UPA00109">
    <property type="reaction ID" value="UER00184"/>
</dbReference>
<dbReference type="GO" id="GO:0005829">
    <property type="term" value="C:cytosol"/>
    <property type="evidence" value="ECO:0007669"/>
    <property type="project" value="TreeGrafter"/>
</dbReference>
<dbReference type="GO" id="GO:0004365">
    <property type="term" value="F:glyceraldehyde-3-phosphate dehydrogenase (NAD+) (phosphorylating) activity"/>
    <property type="evidence" value="ECO:0007669"/>
    <property type="project" value="UniProtKB-EC"/>
</dbReference>
<dbReference type="GO" id="GO:0051287">
    <property type="term" value="F:NAD binding"/>
    <property type="evidence" value="ECO:0007669"/>
    <property type="project" value="InterPro"/>
</dbReference>
<dbReference type="GO" id="GO:0050661">
    <property type="term" value="F:NADP binding"/>
    <property type="evidence" value="ECO:0007669"/>
    <property type="project" value="InterPro"/>
</dbReference>
<dbReference type="GO" id="GO:0006006">
    <property type="term" value="P:glucose metabolic process"/>
    <property type="evidence" value="ECO:0007669"/>
    <property type="project" value="InterPro"/>
</dbReference>
<dbReference type="GO" id="GO:0006096">
    <property type="term" value="P:glycolytic process"/>
    <property type="evidence" value="ECO:0007669"/>
    <property type="project" value="UniProtKB-UniPathway"/>
</dbReference>
<dbReference type="CDD" id="cd18126">
    <property type="entry name" value="GAPDH_I_C"/>
    <property type="match status" value="1"/>
</dbReference>
<dbReference type="CDD" id="cd05214">
    <property type="entry name" value="GAPDH_I_N"/>
    <property type="match status" value="1"/>
</dbReference>
<dbReference type="FunFam" id="3.30.360.10:FF:000001">
    <property type="entry name" value="Glyceraldehyde-3-phosphate dehydrogenase"/>
    <property type="match status" value="1"/>
</dbReference>
<dbReference type="FunFam" id="3.40.50.720:FF:000266">
    <property type="entry name" value="Glyceraldehyde-3-phosphate dehydrogenase"/>
    <property type="match status" value="1"/>
</dbReference>
<dbReference type="Gene3D" id="3.30.360.10">
    <property type="entry name" value="Dihydrodipicolinate Reductase, domain 2"/>
    <property type="match status" value="1"/>
</dbReference>
<dbReference type="Gene3D" id="3.40.50.720">
    <property type="entry name" value="NAD(P)-binding Rossmann-like Domain"/>
    <property type="match status" value="1"/>
</dbReference>
<dbReference type="InterPro" id="IPR020831">
    <property type="entry name" value="GlycerAld/Erythrose_P_DH"/>
</dbReference>
<dbReference type="InterPro" id="IPR020830">
    <property type="entry name" value="GlycerAld_3-P_DH_AS"/>
</dbReference>
<dbReference type="InterPro" id="IPR020829">
    <property type="entry name" value="GlycerAld_3-P_DH_cat"/>
</dbReference>
<dbReference type="InterPro" id="IPR020828">
    <property type="entry name" value="GlycerAld_3-P_DH_NAD(P)-bd"/>
</dbReference>
<dbReference type="InterPro" id="IPR006424">
    <property type="entry name" value="Glyceraldehyde-3-P_DH_1"/>
</dbReference>
<dbReference type="InterPro" id="IPR036291">
    <property type="entry name" value="NAD(P)-bd_dom_sf"/>
</dbReference>
<dbReference type="NCBIfam" id="TIGR01534">
    <property type="entry name" value="GAPDH-I"/>
    <property type="match status" value="1"/>
</dbReference>
<dbReference type="PANTHER" id="PTHR10836">
    <property type="entry name" value="GLYCERALDEHYDE 3-PHOSPHATE DEHYDROGENASE"/>
    <property type="match status" value="1"/>
</dbReference>
<dbReference type="PANTHER" id="PTHR10836:SF76">
    <property type="entry name" value="GLYCERALDEHYDE-3-PHOSPHATE DEHYDROGENASE-RELATED"/>
    <property type="match status" value="1"/>
</dbReference>
<dbReference type="Pfam" id="PF02800">
    <property type="entry name" value="Gp_dh_C"/>
    <property type="match status" value="1"/>
</dbReference>
<dbReference type="Pfam" id="PF00044">
    <property type="entry name" value="Gp_dh_N"/>
    <property type="match status" value="1"/>
</dbReference>
<dbReference type="PIRSF" id="PIRSF000149">
    <property type="entry name" value="GAP_DH"/>
    <property type="match status" value="1"/>
</dbReference>
<dbReference type="PRINTS" id="PR00078">
    <property type="entry name" value="G3PDHDRGNASE"/>
</dbReference>
<dbReference type="SMART" id="SM00846">
    <property type="entry name" value="Gp_dh_N"/>
    <property type="match status" value="1"/>
</dbReference>
<dbReference type="SUPFAM" id="SSF55347">
    <property type="entry name" value="Glyceraldehyde-3-phosphate dehydrogenase-like, C-terminal domain"/>
    <property type="match status" value="1"/>
</dbReference>
<dbReference type="SUPFAM" id="SSF51735">
    <property type="entry name" value="NAD(P)-binding Rossmann-fold domains"/>
    <property type="match status" value="1"/>
</dbReference>
<dbReference type="PROSITE" id="PS00071">
    <property type="entry name" value="GAPDH"/>
    <property type="match status" value="1"/>
</dbReference>
<feature type="chain" id="PRO_0000145576" description="Glyceraldehyde-3-phosphate dehydrogenase 1">
    <location>
        <begin position="1"/>
        <end position="337"/>
    </location>
</feature>
<feature type="active site" description="Nucleophile" evidence="2">
    <location>
        <position position="151"/>
    </location>
</feature>
<feature type="binding site" evidence="1">
    <location>
        <begin position="12"/>
        <end position="13"/>
    </location>
    <ligand>
        <name>NAD(+)</name>
        <dbReference type="ChEBI" id="CHEBI:57540"/>
    </ligand>
</feature>
<feature type="binding site" evidence="1">
    <location>
        <position position="34"/>
    </location>
    <ligand>
        <name>NAD(+)</name>
        <dbReference type="ChEBI" id="CHEBI:57540"/>
    </ligand>
</feature>
<feature type="binding site" evidence="1">
    <location>
        <position position="79"/>
    </location>
    <ligand>
        <name>NAD(+)</name>
        <dbReference type="ChEBI" id="CHEBI:57540"/>
    </ligand>
</feature>
<feature type="binding site" evidence="1">
    <location>
        <begin position="150"/>
        <end position="152"/>
    </location>
    <ligand>
        <name>D-glyceraldehyde 3-phosphate</name>
        <dbReference type="ChEBI" id="CHEBI:59776"/>
    </ligand>
</feature>
<feature type="binding site" evidence="1">
    <location>
        <position position="181"/>
    </location>
    <ligand>
        <name>D-glyceraldehyde 3-phosphate</name>
        <dbReference type="ChEBI" id="CHEBI:59776"/>
    </ligand>
</feature>
<feature type="binding site" evidence="1">
    <location>
        <begin position="210"/>
        <end position="211"/>
    </location>
    <ligand>
        <name>D-glyceraldehyde 3-phosphate</name>
        <dbReference type="ChEBI" id="CHEBI:59776"/>
    </ligand>
</feature>
<feature type="binding site" evidence="1">
    <location>
        <position position="233"/>
    </location>
    <ligand>
        <name>D-glyceraldehyde 3-phosphate</name>
        <dbReference type="ChEBI" id="CHEBI:59776"/>
    </ligand>
</feature>
<feature type="binding site" evidence="1">
    <location>
        <position position="315"/>
    </location>
    <ligand>
        <name>NAD(+)</name>
        <dbReference type="ChEBI" id="CHEBI:57540"/>
    </ligand>
</feature>
<feature type="site" description="Activates thiol group during catalysis" evidence="1">
    <location>
        <position position="178"/>
    </location>
</feature>
<gene>
    <name type="primary">GPD1</name>
</gene>
<accession>Q9C136</accession>
<proteinExistence type="evidence at transcript level"/>